<evidence type="ECO:0000255" key="1">
    <source>
        <dbReference type="HAMAP-Rule" id="MF_00227"/>
    </source>
</evidence>
<protein>
    <recommendedName>
        <fullName evidence="1">Ribonuclease P protein component</fullName>
        <shortName evidence="1">RNase P protein</shortName>
        <shortName evidence="1">RNaseP protein</shortName>
        <ecNumber evidence="1">3.1.26.5</ecNumber>
    </recommendedName>
    <alternativeName>
        <fullName evidence="1">Protein C5</fullName>
    </alternativeName>
</protein>
<sequence length="132" mass="15209">MKALTFPKSHRLLKPSDYSRVFNDVTLKVPHRNFLILASANSLGHARVGLIFSKKNLRLAVQRNRIKRQVRETFRLQPDLPGLDIIVLGRQGLDRLDNDTVRSSLNDLWHRVKKKYRQSTPDQSVGNPRGTE</sequence>
<gene>
    <name evidence="1" type="primary">rnpA</name>
    <name type="ordered locus">Maqu_3897</name>
</gene>
<dbReference type="EC" id="3.1.26.5" evidence="1"/>
<dbReference type="EMBL" id="CP000514">
    <property type="protein sequence ID" value="ABM20965.1"/>
    <property type="molecule type" value="Genomic_DNA"/>
</dbReference>
<dbReference type="RefSeq" id="WP_011787298.1">
    <property type="nucleotide sequence ID" value="NC_008740.1"/>
</dbReference>
<dbReference type="SMR" id="A1U7J6"/>
<dbReference type="STRING" id="351348.Maqu_3897"/>
<dbReference type="KEGG" id="maq:Maqu_3897"/>
<dbReference type="eggNOG" id="COG0594">
    <property type="taxonomic scope" value="Bacteria"/>
</dbReference>
<dbReference type="HOGENOM" id="CLU_117179_11_0_6"/>
<dbReference type="OrthoDB" id="9796422at2"/>
<dbReference type="Proteomes" id="UP000000998">
    <property type="component" value="Chromosome"/>
</dbReference>
<dbReference type="GO" id="GO:0030677">
    <property type="term" value="C:ribonuclease P complex"/>
    <property type="evidence" value="ECO:0007669"/>
    <property type="project" value="TreeGrafter"/>
</dbReference>
<dbReference type="GO" id="GO:0042781">
    <property type="term" value="F:3'-tRNA processing endoribonuclease activity"/>
    <property type="evidence" value="ECO:0007669"/>
    <property type="project" value="TreeGrafter"/>
</dbReference>
<dbReference type="GO" id="GO:0004526">
    <property type="term" value="F:ribonuclease P activity"/>
    <property type="evidence" value="ECO:0007669"/>
    <property type="project" value="UniProtKB-UniRule"/>
</dbReference>
<dbReference type="GO" id="GO:0000049">
    <property type="term" value="F:tRNA binding"/>
    <property type="evidence" value="ECO:0007669"/>
    <property type="project" value="UniProtKB-UniRule"/>
</dbReference>
<dbReference type="GO" id="GO:0001682">
    <property type="term" value="P:tRNA 5'-leader removal"/>
    <property type="evidence" value="ECO:0007669"/>
    <property type="project" value="UniProtKB-UniRule"/>
</dbReference>
<dbReference type="Gene3D" id="3.30.230.10">
    <property type="match status" value="1"/>
</dbReference>
<dbReference type="HAMAP" id="MF_00227">
    <property type="entry name" value="RNase_P"/>
    <property type="match status" value="1"/>
</dbReference>
<dbReference type="InterPro" id="IPR020568">
    <property type="entry name" value="Ribosomal_Su5_D2-typ_SF"/>
</dbReference>
<dbReference type="InterPro" id="IPR014721">
    <property type="entry name" value="Ribsml_uS5_D2-typ_fold_subgr"/>
</dbReference>
<dbReference type="InterPro" id="IPR000100">
    <property type="entry name" value="RNase_P"/>
</dbReference>
<dbReference type="InterPro" id="IPR020539">
    <property type="entry name" value="RNase_P_CS"/>
</dbReference>
<dbReference type="NCBIfam" id="TIGR00188">
    <property type="entry name" value="rnpA"/>
    <property type="match status" value="1"/>
</dbReference>
<dbReference type="PANTHER" id="PTHR33992">
    <property type="entry name" value="RIBONUCLEASE P PROTEIN COMPONENT"/>
    <property type="match status" value="1"/>
</dbReference>
<dbReference type="PANTHER" id="PTHR33992:SF1">
    <property type="entry name" value="RIBONUCLEASE P PROTEIN COMPONENT"/>
    <property type="match status" value="1"/>
</dbReference>
<dbReference type="Pfam" id="PF00825">
    <property type="entry name" value="Ribonuclease_P"/>
    <property type="match status" value="1"/>
</dbReference>
<dbReference type="SUPFAM" id="SSF54211">
    <property type="entry name" value="Ribosomal protein S5 domain 2-like"/>
    <property type="match status" value="1"/>
</dbReference>
<dbReference type="PROSITE" id="PS00648">
    <property type="entry name" value="RIBONUCLEASE_P"/>
    <property type="match status" value="1"/>
</dbReference>
<organism>
    <name type="scientific">Marinobacter nauticus (strain ATCC 700491 / DSM 11845 / VT8)</name>
    <name type="common">Marinobacter aquaeolei</name>
    <dbReference type="NCBI Taxonomy" id="351348"/>
    <lineage>
        <taxon>Bacteria</taxon>
        <taxon>Pseudomonadati</taxon>
        <taxon>Pseudomonadota</taxon>
        <taxon>Gammaproteobacteria</taxon>
        <taxon>Pseudomonadales</taxon>
        <taxon>Marinobacteraceae</taxon>
        <taxon>Marinobacter</taxon>
    </lineage>
</organism>
<keyword id="KW-0255">Endonuclease</keyword>
<keyword id="KW-0378">Hydrolase</keyword>
<keyword id="KW-0540">Nuclease</keyword>
<keyword id="KW-0694">RNA-binding</keyword>
<keyword id="KW-0819">tRNA processing</keyword>
<accession>A1U7J6</accession>
<comment type="function">
    <text evidence="1">RNaseP catalyzes the removal of the 5'-leader sequence from pre-tRNA to produce the mature 5'-terminus. It can also cleave other RNA substrates such as 4.5S RNA. The protein component plays an auxiliary but essential role in vivo by binding to the 5'-leader sequence and broadening the substrate specificity of the ribozyme.</text>
</comment>
<comment type="catalytic activity">
    <reaction evidence="1">
        <text>Endonucleolytic cleavage of RNA, removing 5'-extranucleotides from tRNA precursor.</text>
        <dbReference type="EC" id="3.1.26.5"/>
    </reaction>
</comment>
<comment type="subunit">
    <text evidence="1">Consists of a catalytic RNA component (M1 or rnpB) and a protein subunit.</text>
</comment>
<comment type="similarity">
    <text evidence="1">Belongs to the RnpA family.</text>
</comment>
<reference key="1">
    <citation type="journal article" date="2011" name="Appl. Environ. Microbiol.">
        <title>Genomic potential of Marinobacter aquaeolei, a biogeochemical 'opportunitroph'.</title>
        <authorList>
            <person name="Singer E."/>
            <person name="Webb E.A."/>
            <person name="Nelson W.C."/>
            <person name="Heidelberg J.F."/>
            <person name="Ivanova N."/>
            <person name="Pati A."/>
            <person name="Edwards K.J."/>
        </authorList>
    </citation>
    <scope>NUCLEOTIDE SEQUENCE [LARGE SCALE GENOMIC DNA]</scope>
    <source>
        <strain>ATCC 700491 / DSM 11845 / VT8</strain>
    </source>
</reference>
<proteinExistence type="inferred from homology"/>
<feature type="chain" id="PRO_1000194649" description="Ribonuclease P protein component">
    <location>
        <begin position="1"/>
        <end position="132"/>
    </location>
</feature>
<name>RNPA_MARN8</name>